<dbReference type="EMBL" id="X64840">
    <property type="protein sequence ID" value="CAA46052.1"/>
    <property type="molecule type" value="mRNA"/>
</dbReference>
<dbReference type="EMBL" id="M97635">
    <property type="status" value="NOT_ANNOTATED_CDS"/>
    <property type="molecule type" value="mRNA"/>
</dbReference>
<dbReference type="EMBL" id="M97636">
    <property type="status" value="NOT_ANNOTATED_CDS"/>
    <property type="molecule type" value="mRNA"/>
</dbReference>
<dbReference type="EMBL" id="AC093483">
    <property type="status" value="NOT_ANNOTATED_CDS"/>
    <property type="molecule type" value="Genomic_DNA"/>
</dbReference>
<dbReference type="EMBL" id="AC157575">
    <property type="status" value="NOT_ANNOTATED_CDS"/>
    <property type="molecule type" value="Genomic_DNA"/>
</dbReference>
<dbReference type="EMBL" id="AC159001">
    <property type="status" value="NOT_ANNOTATED_CDS"/>
    <property type="molecule type" value="Genomic_DNA"/>
</dbReference>
<dbReference type="CCDS" id="CCDS23329.1">
    <molecule id="Q61286-1"/>
</dbReference>
<dbReference type="CCDS" id="CCDS72272.1">
    <molecule id="Q61286-2"/>
</dbReference>
<dbReference type="PIR" id="C45020">
    <property type="entry name" value="C45020"/>
</dbReference>
<dbReference type="PIR" id="S19958">
    <property type="entry name" value="S19958"/>
</dbReference>
<dbReference type="RefSeq" id="NP_001240791.1">
    <molecule id="Q61286-2"/>
    <property type="nucleotide sequence ID" value="NM_001253862.1"/>
</dbReference>
<dbReference type="RefSeq" id="NP_001240794.1">
    <property type="nucleotide sequence ID" value="NM_001253865.1"/>
</dbReference>
<dbReference type="RefSeq" id="NP_035674.2">
    <molecule id="Q61286-1"/>
    <property type="nucleotide sequence ID" value="NM_011544.3"/>
</dbReference>
<dbReference type="RefSeq" id="XP_006511057.1">
    <molecule id="Q61286-1"/>
    <property type="nucleotide sequence ID" value="XM_006510994.5"/>
</dbReference>
<dbReference type="RefSeq" id="XP_006511060.1">
    <molecule id="Q61286-2"/>
    <property type="nucleotide sequence ID" value="XM_006510997.4"/>
</dbReference>
<dbReference type="BMRB" id="Q61286"/>
<dbReference type="SMR" id="Q61286"/>
<dbReference type="BioGRID" id="204000">
    <property type="interactions" value="36"/>
</dbReference>
<dbReference type="CORUM" id="Q61286"/>
<dbReference type="DIP" id="DIP-42840N"/>
<dbReference type="FunCoup" id="Q61286">
    <property type="interactions" value="5068"/>
</dbReference>
<dbReference type="IntAct" id="Q61286">
    <property type="interactions" value="4"/>
</dbReference>
<dbReference type="MINT" id="Q61286"/>
<dbReference type="STRING" id="10090.ENSMUSP00000139365"/>
<dbReference type="GlyGen" id="Q61286">
    <property type="glycosylation" value="4 sites, 2 N-linked glycans (2 sites), 1 O-linked glycan (2 sites)"/>
</dbReference>
<dbReference type="iPTMnet" id="Q61286"/>
<dbReference type="PhosphoSitePlus" id="Q61286"/>
<dbReference type="jPOST" id="Q61286"/>
<dbReference type="PaxDb" id="10090-ENSMUSP00000139365"/>
<dbReference type="PeptideAtlas" id="Q61286"/>
<dbReference type="ProteomicsDB" id="267070">
    <molecule id="Q61286-1"/>
</dbReference>
<dbReference type="ProteomicsDB" id="267071">
    <molecule id="Q61286-2"/>
</dbReference>
<dbReference type="Pumba" id="Q61286"/>
<dbReference type="Antibodypedia" id="913">
    <property type="antibodies" value="419 antibodies from 35 providers"/>
</dbReference>
<dbReference type="DNASU" id="21406"/>
<dbReference type="Ensembl" id="ENSMUST00000034755.13">
    <molecule id="Q61286-2"/>
    <property type="protein sequence ID" value="ENSMUSP00000034755.7"/>
    <property type="gene ID" value="ENSMUSG00000032228.17"/>
</dbReference>
<dbReference type="Ensembl" id="ENSMUST00000183404.8">
    <molecule id="Q61286-1"/>
    <property type="protein sequence ID" value="ENSMUSP00000139365.2"/>
    <property type="gene ID" value="ENSMUSG00000032228.17"/>
</dbReference>
<dbReference type="Ensembl" id="ENSMUST00000184783.8">
    <molecule id="Q61286-1"/>
    <property type="protein sequence ID" value="ENSMUSP00000139364.2"/>
    <property type="gene ID" value="ENSMUSG00000032228.17"/>
</dbReference>
<dbReference type="Ensembl" id="ENSMUST00000185117.8">
    <molecule id="Q61286-2"/>
    <property type="protein sequence ID" value="ENSMUSP00000138925.2"/>
    <property type="gene ID" value="ENSMUSG00000032228.17"/>
</dbReference>
<dbReference type="GeneID" id="21406"/>
<dbReference type="KEGG" id="mmu:21406"/>
<dbReference type="UCSC" id="uc009qpf.2">
    <molecule id="Q61286-1"/>
    <property type="organism name" value="mouse"/>
</dbReference>
<dbReference type="UCSC" id="uc009qpg.2">
    <molecule id="Q61286-2"/>
    <property type="organism name" value="mouse"/>
</dbReference>
<dbReference type="AGR" id="MGI:101877"/>
<dbReference type="CTD" id="6938"/>
<dbReference type="MGI" id="MGI:101877">
    <property type="gene designation" value="Tcf12"/>
</dbReference>
<dbReference type="VEuPathDB" id="HostDB:ENSMUSG00000032228"/>
<dbReference type="eggNOG" id="KOG3910">
    <property type="taxonomic scope" value="Eukaryota"/>
</dbReference>
<dbReference type="GeneTree" id="ENSGT00940000155047"/>
<dbReference type="HOGENOM" id="CLU_021099_2_0_1"/>
<dbReference type="InParanoid" id="Q61286"/>
<dbReference type="OMA" id="SSRGRTX"/>
<dbReference type="OrthoDB" id="10034090at2759"/>
<dbReference type="PhylomeDB" id="Q61286"/>
<dbReference type="TreeFam" id="TF321672"/>
<dbReference type="Reactome" id="R-MMU-525793">
    <property type="pathway name" value="Myogenesis"/>
</dbReference>
<dbReference type="Reactome" id="R-MMU-8939236">
    <property type="pathway name" value="RUNX1 regulates transcription of genes involved in differentiation of HSCs"/>
</dbReference>
<dbReference type="BioGRID-ORCS" id="21406">
    <property type="hits" value="6 hits in 80 CRISPR screens"/>
</dbReference>
<dbReference type="ChiTaRS" id="Tcf12">
    <property type="organism name" value="mouse"/>
</dbReference>
<dbReference type="PRO" id="PR:Q61286"/>
<dbReference type="Proteomes" id="UP000000589">
    <property type="component" value="Chromosome 9"/>
</dbReference>
<dbReference type="RNAct" id="Q61286">
    <property type="molecule type" value="protein"/>
</dbReference>
<dbReference type="Bgee" id="ENSMUSG00000032228">
    <property type="expression patterns" value="Expressed in ureter smooth muscle and 294 other cell types or tissues"/>
</dbReference>
<dbReference type="ExpressionAtlas" id="Q61286">
    <property type="expression patterns" value="baseline and differential"/>
</dbReference>
<dbReference type="GO" id="GO:0000785">
    <property type="term" value="C:chromatin"/>
    <property type="evidence" value="ECO:0007669"/>
    <property type="project" value="Ensembl"/>
</dbReference>
<dbReference type="GO" id="GO:0005737">
    <property type="term" value="C:cytoplasm"/>
    <property type="evidence" value="ECO:0007669"/>
    <property type="project" value="Ensembl"/>
</dbReference>
<dbReference type="GO" id="GO:0016607">
    <property type="term" value="C:nuclear speck"/>
    <property type="evidence" value="ECO:0007669"/>
    <property type="project" value="Ensembl"/>
</dbReference>
<dbReference type="GO" id="GO:0005634">
    <property type="term" value="C:nucleus"/>
    <property type="evidence" value="ECO:0000266"/>
    <property type="project" value="MGI"/>
</dbReference>
<dbReference type="GO" id="GO:0090575">
    <property type="term" value="C:RNA polymerase II transcription regulator complex"/>
    <property type="evidence" value="ECO:0007669"/>
    <property type="project" value="Ensembl"/>
</dbReference>
<dbReference type="GO" id="GO:0005667">
    <property type="term" value="C:transcription regulator complex"/>
    <property type="evidence" value="ECO:0000314"/>
    <property type="project" value="MGI"/>
</dbReference>
<dbReference type="GO" id="GO:0043425">
    <property type="term" value="F:bHLH transcription factor binding"/>
    <property type="evidence" value="ECO:0007669"/>
    <property type="project" value="Ensembl"/>
</dbReference>
<dbReference type="GO" id="GO:0035497">
    <property type="term" value="F:cAMP response element binding"/>
    <property type="evidence" value="ECO:0007669"/>
    <property type="project" value="Ensembl"/>
</dbReference>
<dbReference type="GO" id="GO:0003677">
    <property type="term" value="F:DNA binding"/>
    <property type="evidence" value="ECO:0000314"/>
    <property type="project" value="MGI"/>
</dbReference>
<dbReference type="GO" id="GO:0001228">
    <property type="term" value="F:DNA-binding transcription activator activity, RNA polymerase II-specific"/>
    <property type="evidence" value="ECO:0007669"/>
    <property type="project" value="Ensembl"/>
</dbReference>
<dbReference type="GO" id="GO:0070888">
    <property type="term" value="F:E-box binding"/>
    <property type="evidence" value="ECO:0000314"/>
    <property type="project" value="UniProtKB"/>
</dbReference>
<dbReference type="GO" id="GO:0071837">
    <property type="term" value="F:HMG box domain binding"/>
    <property type="evidence" value="ECO:0007669"/>
    <property type="project" value="Ensembl"/>
</dbReference>
<dbReference type="GO" id="GO:0046982">
    <property type="term" value="F:protein heterodimerization activity"/>
    <property type="evidence" value="ECO:0000314"/>
    <property type="project" value="UniProtKB"/>
</dbReference>
<dbReference type="GO" id="GO:0046332">
    <property type="term" value="F:SMAD binding"/>
    <property type="evidence" value="ECO:0007669"/>
    <property type="project" value="Ensembl"/>
</dbReference>
<dbReference type="GO" id="GO:0030154">
    <property type="term" value="P:cell differentiation"/>
    <property type="evidence" value="ECO:0007669"/>
    <property type="project" value="UniProtKB-KW"/>
</dbReference>
<dbReference type="GO" id="GO:0010467">
    <property type="term" value="P:gene expression"/>
    <property type="evidence" value="ECO:0000315"/>
    <property type="project" value="MGI"/>
</dbReference>
<dbReference type="GO" id="GO:0007399">
    <property type="term" value="P:nervous system development"/>
    <property type="evidence" value="ECO:0007669"/>
    <property type="project" value="UniProtKB-KW"/>
</dbReference>
<dbReference type="GO" id="GO:0045893">
    <property type="term" value="P:positive regulation of DNA-templated transcription"/>
    <property type="evidence" value="ECO:0000314"/>
    <property type="project" value="MGI"/>
</dbReference>
<dbReference type="GO" id="GO:0010628">
    <property type="term" value="P:positive regulation of gene expression"/>
    <property type="evidence" value="ECO:0000315"/>
    <property type="project" value="MGI"/>
</dbReference>
<dbReference type="GO" id="GO:0045666">
    <property type="term" value="P:positive regulation of neuron differentiation"/>
    <property type="evidence" value="ECO:0000314"/>
    <property type="project" value="UniProtKB"/>
</dbReference>
<dbReference type="GO" id="GO:0097210">
    <property type="term" value="P:response to gonadotropin-releasing hormone"/>
    <property type="evidence" value="ECO:0000250"/>
    <property type="project" value="UniProtKB"/>
</dbReference>
<dbReference type="CDD" id="cd18945">
    <property type="entry name" value="bHLH_E-protein_TCF4_E2-2"/>
    <property type="match status" value="1"/>
</dbReference>
<dbReference type="FunFam" id="4.10.280.10:FF:000001">
    <property type="entry name" value="Putative transcription factor 12"/>
    <property type="match status" value="1"/>
</dbReference>
<dbReference type="Gene3D" id="4.10.280.10">
    <property type="entry name" value="Helix-loop-helix DNA-binding domain"/>
    <property type="match status" value="1"/>
</dbReference>
<dbReference type="InterPro" id="IPR011598">
    <property type="entry name" value="bHLH_dom"/>
</dbReference>
<dbReference type="InterPro" id="IPR036638">
    <property type="entry name" value="HLH_DNA-bd_sf"/>
</dbReference>
<dbReference type="InterPro" id="IPR051098">
    <property type="entry name" value="NeuroDiff_E-box_TFs"/>
</dbReference>
<dbReference type="PANTHER" id="PTHR11793">
    <property type="entry name" value="BASIC HELIX-LOOP-HELIX TRANSCRIPTION FACTOR"/>
    <property type="match status" value="1"/>
</dbReference>
<dbReference type="PANTHER" id="PTHR11793:SF11">
    <property type="entry name" value="TRANSCRIPTION FACTOR 12"/>
    <property type="match status" value="1"/>
</dbReference>
<dbReference type="Pfam" id="PF00010">
    <property type="entry name" value="HLH"/>
    <property type="match status" value="1"/>
</dbReference>
<dbReference type="SMART" id="SM00353">
    <property type="entry name" value="HLH"/>
    <property type="match status" value="1"/>
</dbReference>
<dbReference type="SUPFAM" id="SSF47459">
    <property type="entry name" value="HLH, helix-loop-helix DNA-binding domain"/>
    <property type="match status" value="1"/>
</dbReference>
<dbReference type="PROSITE" id="PS50888">
    <property type="entry name" value="BHLH"/>
    <property type="match status" value="1"/>
</dbReference>
<keyword id="KW-0025">Alternative splicing</keyword>
<keyword id="KW-0217">Developmental protein</keyword>
<keyword id="KW-0221">Differentiation</keyword>
<keyword id="KW-0238">DNA-binding</keyword>
<keyword id="KW-1017">Isopeptide bond</keyword>
<keyword id="KW-0524">Neurogenesis</keyword>
<keyword id="KW-0539">Nucleus</keyword>
<keyword id="KW-0597">Phosphoprotein</keyword>
<keyword id="KW-1185">Reference proteome</keyword>
<keyword id="KW-0804">Transcription</keyword>
<keyword id="KW-0805">Transcription regulation</keyword>
<keyword id="KW-0832">Ubl conjugation</keyword>
<name>HTF4_MOUSE</name>
<feature type="chain" id="PRO_0000127230" description="Transcription factor 12">
    <location>
        <begin position="1"/>
        <end position="706"/>
    </location>
</feature>
<feature type="domain" description="bHLH" evidence="3">
    <location>
        <begin position="601"/>
        <end position="654"/>
    </location>
</feature>
<feature type="region of interest" description="Disordered" evidence="4">
    <location>
        <begin position="25"/>
        <end position="109"/>
    </location>
</feature>
<feature type="region of interest" description="Leucine-zipper">
    <location>
        <begin position="119"/>
        <end position="140"/>
    </location>
</feature>
<feature type="region of interest" description="Disordered" evidence="4">
    <location>
        <begin position="140"/>
        <end position="222"/>
    </location>
</feature>
<feature type="region of interest" description="Disordered" evidence="4">
    <location>
        <begin position="249"/>
        <end position="313"/>
    </location>
</feature>
<feature type="region of interest" description="Disordered" evidence="4">
    <location>
        <begin position="349"/>
        <end position="392"/>
    </location>
</feature>
<feature type="region of interest" description="Disordered" evidence="4">
    <location>
        <begin position="520"/>
        <end position="604"/>
    </location>
</feature>
<feature type="region of interest" description="Class A specific domain">
    <location>
        <begin position="656"/>
        <end position="679"/>
    </location>
</feature>
<feature type="region of interest" description="Disordered" evidence="4">
    <location>
        <begin position="674"/>
        <end position="706"/>
    </location>
</feature>
<feature type="short sequence motif" description="Nuclear localization signal" evidence="2">
    <location>
        <begin position="181"/>
        <end position="188"/>
    </location>
</feature>
<feature type="compositionally biased region" description="Polar residues" evidence="4">
    <location>
        <begin position="30"/>
        <end position="48"/>
    </location>
</feature>
<feature type="compositionally biased region" description="Polar residues" evidence="4">
    <location>
        <begin position="56"/>
        <end position="76"/>
    </location>
</feature>
<feature type="compositionally biased region" description="Basic and acidic residues" evidence="4">
    <location>
        <begin position="81"/>
        <end position="93"/>
    </location>
</feature>
<feature type="compositionally biased region" description="Polar residues" evidence="4">
    <location>
        <begin position="144"/>
        <end position="163"/>
    </location>
</feature>
<feature type="compositionally biased region" description="Low complexity" evidence="4">
    <location>
        <begin position="256"/>
        <end position="269"/>
    </location>
</feature>
<feature type="compositionally biased region" description="Polar residues" evidence="4">
    <location>
        <begin position="282"/>
        <end position="306"/>
    </location>
</feature>
<feature type="compositionally biased region" description="Low complexity" evidence="4">
    <location>
        <begin position="352"/>
        <end position="363"/>
    </location>
</feature>
<feature type="compositionally biased region" description="Polar residues" evidence="4">
    <location>
        <begin position="364"/>
        <end position="376"/>
    </location>
</feature>
<feature type="compositionally biased region" description="Polar residues" evidence="4">
    <location>
        <begin position="383"/>
        <end position="392"/>
    </location>
</feature>
<feature type="compositionally biased region" description="Basic and acidic residues" evidence="4">
    <location>
        <begin position="542"/>
        <end position="554"/>
    </location>
</feature>
<feature type="compositionally biased region" description="Basic and acidic residues" evidence="4">
    <location>
        <begin position="560"/>
        <end position="575"/>
    </location>
</feature>
<feature type="compositionally biased region" description="Basic and acidic residues" evidence="4">
    <location>
        <begin position="592"/>
        <end position="604"/>
    </location>
</feature>
<feature type="compositionally biased region" description="Polar residues" evidence="4">
    <location>
        <begin position="697"/>
        <end position="706"/>
    </location>
</feature>
<feature type="modified residue" description="Phosphoserine" evidence="1">
    <location>
        <position position="47"/>
    </location>
</feature>
<feature type="modified residue" description="Phosphoserine" evidence="1">
    <location>
        <position position="67"/>
    </location>
</feature>
<feature type="modified residue" description="Phosphoserine" evidence="1">
    <location>
        <position position="79"/>
    </location>
</feature>
<feature type="modified residue" description="Phosphoserine" evidence="9">
    <location>
        <position position="98"/>
    </location>
</feature>
<feature type="modified residue" description="Phosphoserine" evidence="1">
    <location>
        <position position="116"/>
    </location>
</feature>
<feature type="modified residue" description="Phosphoserine" evidence="9">
    <location>
        <position position="124"/>
    </location>
</feature>
<feature type="modified residue" description="Phosphothreonine" evidence="1">
    <location>
        <position position="313"/>
    </location>
</feature>
<feature type="modified residue" description="Phosphoserine" evidence="1">
    <location>
        <position position="333"/>
    </location>
</feature>
<feature type="modified residue" description="Phosphoserine" evidence="1">
    <location>
        <position position="564"/>
    </location>
</feature>
<feature type="modified residue" description="Phosphothreonine" evidence="1">
    <location>
        <position position="581"/>
    </location>
</feature>
<feature type="modified residue" description="Phosphoserine" evidence="1">
    <location>
        <position position="582"/>
    </location>
</feature>
<feature type="modified residue" description="Phosphoserine" evidence="1">
    <location>
        <position position="583"/>
    </location>
</feature>
<feature type="cross-link" description="Glycyl lysine isopeptide (Lys-Gly) (interchain with G-Cter in SUMO2)" evidence="1">
    <location>
        <position position="110"/>
    </location>
</feature>
<feature type="cross-link" description="Glycyl lysine isopeptide (Lys-Gly) (interchain with G-Cter in SUMO2)" evidence="1">
    <location>
        <position position="181"/>
    </location>
</feature>
<feature type="cross-link" description="Glycyl lysine isopeptide (Lys-Gly) (interchain with G-Cter in SUMO2)" evidence="1">
    <location>
        <position position="543"/>
    </location>
</feature>
<feature type="cross-link" description="Glycyl lysine isopeptide (Lys-Gly) (interchain with G-Cter in SUMO2)" evidence="1">
    <location>
        <position position="574"/>
    </location>
</feature>
<feature type="cross-link" description="Glycyl lysine isopeptide (Lys-Gly) (interchain with G-Cter in SUMO2)" evidence="1">
    <location>
        <position position="633"/>
    </location>
</feature>
<feature type="cross-link" description="Glycyl lysine isopeptide (Lys-Gly) (interchain with G-Cter in SUMO2)" evidence="1">
    <location>
        <position position="677"/>
    </location>
</feature>
<feature type="splice variant" id="VSP_002105" description="In isoform ALF1A." evidence="7">
    <location>
        <begin position="397"/>
        <end position="420"/>
    </location>
</feature>
<feature type="sequence conflict" description="In Ref. 2; M97635." evidence="8" ref="2">
    <original>K</original>
    <variation>E</variation>
    <location>
        <position position="416"/>
    </location>
</feature>
<feature type="sequence conflict" description="In Ref. 2; M97635/M97636." evidence="8" ref="2">
    <original>V</original>
    <variation>F</variation>
    <location>
        <position position="537"/>
    </location>
</feature>
<feature type="sequence conflict" description="In Ref. 1; CAA46052." evidence="8" ref="1">
    <original>N</original>
    <variation>S</variation>
    <location>
        <position position="687"/>
    </location>
</feature>
<feature type="modified residue" description="Phosphoserine" evidence="9">
    <location sequence="Q61286-2">
        <position position="392"/>
    </location>
</feature>
<organism>
    <name type="scientific">Mus musculus</name>
    <name type="common">Mouse</name>
    <dbReference type="NCBI Taxonomy" id="10090"/>
    <lineage>
        <taxon>Eukaryota</taxon>
        <taxon>Metazoa</taxon>
        <taxon>Chordata</taxon>
        <taxon>Craniata</taxon>
        <taxon>Vertebrata</taxon>
        <taxon>Euteleostomi</taxon>
        <taxon>Mammalia</taxon>
        <taxon>Eutheria</taxon>
        <taxon>Euarchontoglires</taxon>
        <taxon>Glires</taxon>
        <taxon>Rodentia</taxon>
        <taxon>Myomorpha</taxon>
        <taxon>Muroidea</taxon>
        <taxon>Muridae</taxon>
        <taxon>Murinae</taxon>
        <taxon>Mus</taxon>
        <taxon>Mus</taxon>
    </lineage>
</organism>
<accession>Q61286</accession>
<accession>E9QPN4</accession>
<comment type="function">
    <text evidence="1 6">Transcriptional regulator. Involved in the initiation of neuronal differentiation. Activates transcription by binding to the E box (5'-CANNTG-3') (PubMed:18214987). May be involved in the functional network that regulates the development of the GnRH axis (By similarity).</text>
</comment>
<comment type="subunit">
    <text evidence="1 5 6">Efficient DNA binding requires dimerization with another bHLH protein. Forms homo- or heterooligomers with myogenin, E12 and ITF2 proteins and RUNX1T1 (By similarity). Interacts with PTF1A. Interacts with NEUROD2. Interacts with BHLHA9.</text>
</comment>
<comment type="interaction">
    <interactant intactId="EBI-8006499">
        <id>Q61286</id>
    </interactant>
    <interactant intactId="EBI-8006437">
        <id>P22091</id>
        <label>Tal1</label>
    </interactant>
    <organismsDiffer>false</organismsDiffer>
    <experiments>2</experiments>
</comment>
<comment type="subcellular location">
    <subcellularLocation>
        <location>Nucleus</location>
    </subcellularLocation>
</comment>
<comment type="alternative products">
    <event type="alternative splicing"/>
    <isoform>
        <id>Q61286-1</id>
        <name>ALF1B</name>
        <name>ME1A</name>
        <sequence type="displayed"/>
    </isoform>
    <isoform>
        <id>Q61286-2</id>
        <name>ALF1A</name>
        <name>ME1B</name>
        <sequence type="described" ref="VSP_002105"/>
    </isoform>
</comment>
<comment type="tissue specificity">
    <text>Widely expressed.</text>
</comment>
<comment type="developmental stage">
    <text evidence="6">Abundantly expressed during development of the central nervous system, in particular in proliferating neuroblasts and in cells at the initial stages of differentiation. Also expressed at high levels in morphogenetically active regions such as limb buds, somites and mesonephric tubules. Expression decreases once cellular differentiation is over.</text>
</comment>
<comment type="disruption phenotype">
    <text evidence="6">Mice are smaller than their wild-type littermates and fail to thrive 14 days after birth.</text>
</comment>
<sequence>MNPQQQRMAAIGTDKELSDLLDFSAMFSPPVNSGKTRPTTLGSSQFSGSGMDERGGTTSWGTSGQPSPSYDSSRGFTDSPHYSDHLNDSRLGTHEGLSPTPFMNSNLIGKTSERGSFSLYSRDSGLSGCQSSLLRQDLGLGSPAQLSSSGKPGTPYYSFSATSSRRRPLHDSVALDPLQAKKVRKVPPGLPSSVYAPSPNSDDFNRESPSYPSPKPPTSMFASTFFMQDGTHSSSDLWSSSNGMSQPGFGGILGTSTSHMSQSSSYGSLHSHDRLSYPPHSVSPTDINTSLPPMSSFHRGSTSSSPYVAASHTPPINGSDSILGTRGNAAGSSQTGDALGKALASIYSPDHTSSSFPSNPSTPVGSPSPLTGTSQWPRAGGQAPSSPSYENSLHSLKNRVEQQLHEHLQDAMSFLKDVCEQSRMEDRLDRLDDAIHVLRNHAVGPSTSLPTSHSDIHSLLGPSHNASIGNLNSNYGGSSLVTNSRSASMVGTHREDSVSLNGNHSVLSSTVAASNTELNHKTPENFRGGVQNQSGSVVPTEIKTENKEKDENLHEPPSSDDMKSDDESSQKDIKVSSRGRTSSTNEDEDLNPEQKIEREKERRMANNARERLRVRDINEAFKELGRMCQLHLKSEKPQTKLLILHQAVAVILSLEQQVRERNLNPKAACLKRREEEKVSAASAEPPNTLPGAHPGLSESTNPMGHL</sequence>
<gene>
    <name type="primary">Tcf12</name>
    <name type="synonym">Alf1</name>
    <name type="synonym">Meb</name>
</gene>
<reference key="1">
    <citation type="journal article" date="1992" name="Mol. Cell. Biol.">
        <title>Murine helix-loop-helix transcriptional activator proteins binding to the E-box motif of the Akv murine leukemia virus enhancer identified by cDNA cloning.</title>
        <authorList>
            <person name="Nielsen A.L."/>
            <person name="Pallisgaard N."/>
            <person name="Pedersen F.S."/>
            <person name="Joergensen P."/>
        </authorList>
    </citation>
    <scope>NUCLEOTIDE SEQUENCE [MRNA] (ISOFORMS ALF1A AND ALF1B)</scope>
</reference>
<reference key="2">
    <citation type="journal article" date="1993" name="Eur. J. Neurosci.">
        <title>ME1 and GE1: basic helix-loop-helix transcription factors expressed at high levels in the developing nervous system and in morphogenetically active regions.</title>
        <authorList>
            <person name="Neuman T."/>
            <person name="Keen A."/>
            <person name="Knapik E."/>
            <person name="Shain D."/>
            <person name="Ross M."/>
            <person name="Nornes H.O."/>
            <person name="Zuber M.X."/>
        </authorList>
    </citation>
    <scope>NUCLEOTIDE SEQUENCE [MRNA]</scope>
    <source>
        <strain>BALB/cJ</strain>
        <tissue>Cerebellum</tissue>
    </source>
</reference>
<reference key="3">
    <citation type="journal article" date="2009" name="PLoS Biol.">
        <title>Lineage-specific biology revealed by a finished genome assembly of the mouse.</title>
        <authorList>
            <person name="Church D.M."/>
            <person name="Goodstadt L."/>
            <person name="Hillier L.W."/>
            <person name="Zody M.C."/>
            <person name="Goldstein S."/>
            <person name="She X."/>
            <person name="Bult C.J."/>
            <person name="Agarwala R."/>
            <person name="Cherry J.L."/>
            <person name="DiCuccio M."/>
            <person name="Hlavina W."/>
            <person name="Kapustin Y."/>
            <person name="Meric P."/>
            <person name="Maglott D."/>
            <person name="Birtle Z."/>
            <person name="Marques A.C."/>
            <person name="Graves T."/>
            <person name="Zhou S."/>
            <person name="Teague B."/>
            <person name="Potamousis K."/>
            <person name="Churas C."/>
            <person name="Place M."/>
            <person name="Herschleb J."/>
            <person name="Runnheim R."/>
            <person name="Forrest D."/>
            <person name="Amos-Landgraf J."/>
            <person name="Schwartz D.C."/>
            <person name="Cheng Z."/>
            <person name="Lindblad-Toh K."/>
            <person name="Eichler E.E."/>
            <person name="Ponting C.P."/>
        </authorList>
    </citation>
    <scope>NUCLEOTIDE SEQUENCE [LARGE SCALE GENOMIC DNA]</scope>
    <source>
        <strain>C57BL/6J</strain>
    </source>
</reference>
<reference key="4">
    <citation type="journal article" date="2001" name="J. Biol. Chem.">
        <title>The role of PTF1-P48 in pancreatic acinar gene expression.</title>
        <authorList>
            <person name="Rose S.D."/>
            <person name="Swift G.H."/>
            <person name="Peyton M.J."/>
            <person name="Hammer R.E."/>
            <person name="MacDonald R.J."/>
        </authorList>
    </citation>
    <scope>INTERACTION WITH PTF1A</scope>
</reference>
<reference key="5">
    <citation type="journal article" date="2008" name="J. Neurosci. Res.">
        <title>E protein dosage influences brain development more than family member identity.</title>
        <authorList>
            <person name="Ravanpay A.C."/>
            <person name="Olson J.M."/>
        </authorList>
    </citation>
    <scope>FUNCTION</scope>
    <scope>INTERACTION WITH NEUROD2</scope>
    <scope>DNA-BINDING</scope>
    <scope>DISRUPTION PHENOTYPE</scope>
    <scope>DEVELOPMENTAL STAGE</scope>
</reference>
<reference key="6">
    <citation type="journal article" date="2010" name="Cell">
        <title>A tissue-specific atlas of mouse protein phosphorylation and expression.</title>
        <authorList>
            <person name="Huttlin E.L."/>
            <person name="Jedrychowski M.P."/>
            <person name="Elias J.E."/>
            <person name="Goswami T."/>
            <person name="Rad R."/>
            <person name="Beausoleil S.A."/>
            <person name="Villen J."/>
            <person name="Haas W."/>
            <person name="Sowa M.E."/>
            <person name="Gygi S.P."/>
        </authorList>
    </citation>
    <scope>PHOSPHORYLATION [LARGE SCALE ANALYSIS] AT SER-98 AND SER-124</scope>
    <scope>PHOSPHORYLATION [LARGE SCALE ANALYSIS] AT SER-392 (ISOFORM ALF1A)</scope>
    <scope>IDENTIFICATION BY MASS SPECTROMETRY [LARGE SCALE ANALYSIS]</scope>
    <source>
        <tissue>Brain</tissue>
        <tissue>Brown adipose tissue</tissue>
        <tissue>Lung</tissue>
        <tissue>Pancreas</tissue>
        <tissue>Spleen</tissue>
    </source>
</reference>
<evidence type="ECO:0000250" key="1">
    <source>
        <dbReference type="UniProtKB" id="Q99081"/>
    </source>
</evidence>
<evidence type="ECO:0000255" key="2"/>
<evidence type="ECO:0000255" key="3">
    <source>
        <dbReference type="PROSITE-ProRule" id="PRU00981"/>
    </source>
</evidence>
<evidence type="ECO:0000256" key="4">
    <source>
        <dbReference type="SAM" id="MobiDB-lite"/>
    </source>
</evidence>
<evidence type="ECO:0000269" key="5">
    <source>
    </source>
</evidence>
<evidence type="ECO:0000269" key="6">
    <source>
    </source>
</evidence>
<evidence type="ECO:0000303" key="7">
    <source>
    </source>
</evidence>
<evidence type="ECO:0000305" key="8"/>
<evidence type="ECO:0007744" key="9">
    <source>
    </source>
</evidence>
<proteinExistence type="evidence at protein level"/>
<protein>
    <recommendedName>
        <fullName>Transcription factor 12</fullName>
        <shortName>TCF-12</shortName>
    </recommendedName>
    <alternativeName>
        <fullName>Class A helix-loop-helix transcription factor ME1</fullName>
    </alternativeName>
    <alternativeName>
        <fullName>DNA-binding protein HTF4</fullName>
    </alternativeName>
    <alternativeName>
        <fullName>E-box-binding protein</fullName>
    </alternativeName>
    <alternativeName>
        <fullName>Transcription factor HTF-4</fullName>
    </alternativeName>
</protein>